<protein>
    <recommendedName>
        <fullName evidence="1">Acetate kinase</fullName>
        <ecNumber evidence="1">2.7.2.1</ecNumber>
    </recommendedName>
    <alternativeName>
        <fullName evidence="1">Acetokinase</fullName>
    </alternativeName>
</protein>
<name>ACKA_NOSS1</name>
<keyword id="KW-0067">ATP-binding</keyword>
<keyword id="KW-0963">Cytoplasm</keyword>
<keyword id="KW-0418">Kinase</keyword>
<keyword id="KW-0460">Magnesium</keyword>
<keyword id="KW-0479">Metal-binding</keyword>
<keyword id="KW-0547">Nucleotide-binding</keyword>
<keyword id="KW-1185">Reference proteome</keyword>
<keyword id="KW-0808">Transferase</keyword>
<comment type="function">
    <text evidence="1">Catalyzes the formation of acetyl phosphate from acetate and ATP. Can also catalyze the reverse reaction.</text>
</comment>
<comment type="catalytic activity">
    <reaction evidence="1">
        <text>acetate + ATP = acetyl phosphate + ADP</text>
        <dbReference type="Rhea" id="RHEA:11352"/>
        <dbReference type="ChEBI" id="CHEBI:22191"/>
        <dbReference type="ChEBI" id="CHEBI:30089"/>
        <dbReference type="ChEBI" id="CHEBI:30616"/>
        <dbReference type="ChEBI" id="CHEBI:456216"/>
        <dbReference type="EC" id="2.7.2.1"/>
    </reaction>
</comment>
<comment type="cofactor">
    <cofactor evidence="1">
        <name>Mg(2+)</name>
        <dbReference type="ChEBI" id="CHEBI:18420"/>
    </cofactor>
    <cofactor evidence="1">
        <name>Mn(2+)</name>
        <dbReference type="ChEBI" id="CHEBI:29035"/>
    </cofactor>
    <text evidence="1">Mg(2+). Can also accept Mn(2+).</text>
</comment>
<comment type="pathway">
    <text evidence="1">Metabolic intermediate biosynthesis; acetyl-CoA biosynthesis; acetyl-CoA from acetate: step 1/2.</text>
</comment>
<comment type="subunit">
    <text evidence="1">Homodimer.</text>
</comment>
<comment type="subcellular location">
    <subcellularLocation>
        <location evidence="1">Cytoplasm</location>
    </subcellularLocation>
</comment>
<comment type="similarity">
    <text evidence="1">Belongs to the acetokinase family.</text>
</comment>
<feature type="chain" id="PRO_0000107524" description="Acetate kinase">
    <location>
        <begin position="1"/>
        <end position="405"/>
    </location>
</feature>
<feature type="active site" description="Proton donor/acceptor" evidence="1">
    <location>
        <position position="156"/>
    </location>
</feature>
<feature type="binding site" evidence="1">
    <location>
        <position position="7"/>
    </location>
    <ligand>
        <name>Mg(2+)</name>
        <dbReference type="ChEBI" id="CHEBI:18420"/>
    </ligand>
</feature>
<feature type="binding site" evidence="1">
    <location>
        <position position="14"/>
    </location>
    <ligand>
        <name>ATP</name>
        <dbReference type="ChEBI" id="CHEBI:30616"/>
    </ligand>
</feature>
<feature type="binding site" evidence="1">
    <location>
        <position position="99"/>
    </location>
    <ligand>
        <name>substrate</name>
    </ligand>
</feature>
<feature type="binding site" evidence="1">
    <location>
        <begin position="215"/>
        <end position="219"/>
    </location>
    <ligand>
        <name>ATP</name>
        <dbReference type="ChEBI" id="CHEBI:30616"/>
    </ligand>
</feature>
<feature type="binding site" evidence="1">
    <location>
        <position position="391"/>
    </location>
    <ligand>
        <name>Mg(2+)</name>
        <dbReference type="ChEBI" id="CHEBI:18420"/>
    </ligand>
</feature>
<feature type="site" description="Transition state stabilizer" evidence="1">
    <location>
        <position position="187"/>
    </location>
</feature>
<feature type="site" description="Transition state stabilizer" evidence="1">
    <location>
        <position position="248"/>
    </location>
</feature>
<sequence length="405" mass="43937">MKVLILNAGSSSQKSCLYEIPDDALLSEAPQPLWEGKVNWTQDRSVAEIEVKTARGETLHESIYGDSRQAHVTYMLYTLSRGATKVIGQLSEIDVVGHRVVHGGQNYRHSVIITEEVKQAIAKLSNLAPAHNPAALEGIEAIEKSLGDVPQVAVFDTGFHATLPDAAAIYPGPFEWVEQGIRRYGFHGISHQYCSARAAQILGRDLASLRIITCHLGNGCSLAAIKNGRSIDTTMGFTPLDGLMMGSRSGAIDPGIIVHLMRQSDYSAERLDYVLNKASGLRGISGVSSDLPQVIEAITQGNYRAQLAWDMYVHRLRSGIGSMLASLGGLDVLVFTAGVGEKSAGIRQAACEAFGFLGLKLDPEKNQNKPVDIDIATADSTVRVLVIHTQEDWAIAQQCWHLLKR</sequence>
<evidence type="ECO:0000255" key="1">
    <source>
        <dbReference type="HAMAP-Rule" id="MF_00020"/>
    </source>
</evidence>
<organism>
    <name type="scientific">Nostoc sp. (strain PCC 7120 / SAG 25.82 / UTEX 2576)</name>
    <dbReference type="NCBI Taxonomy" id="103690"/>
    <lineage>
        <taxon>Bacteria</taxon>
        <taxon>Bacillati</taxon>
        <taxon>Cyanobacteriota</taxon>
        <taxon>Cyanophyceae</taxon>
        <taxon>Nostocales</taxon>
        <taxon>Nostocaceae</taxon>
        <taxon>Nostoc</taxon>
    </lineage>
</organism>
<reference key="1">
    <citation type="journal article" date="2001" name="DNA Res.">
        <title>Complete genomic sequence of the filamentous nitrogen-fixing cyanobacterium Anabaena sp. strain PCC 7120.</title>
        <authorList>
            <person name="Kaneko T."/>
            <person name="Nakamura Y."/>
            <person name="Wolk C.P."/>
            <person name="Kuritz T."/>
            <person name="Sasamoto S."/>
            <person name="Watanabe A."/>
            <person name="Iriguchi M."/>
            <person name="Ishikawa A."/>
            <person name="Kawashima K."/>
            <person name="Kimura T."/>
            <person name="Kishida Y."/>
            <person name="Kohara M."/>
            <person name="Matsumoto M."/>
            <person name="Matsuno A."/>
            <person name="Muraki A."/>
            <person name="Nakazaki N."/>
            <person name="Shimpo S."/>
            <person name="Sugimoto M."/>
            <person name="Takazawa M."/>
            <person name="Yamada M."/>
            <person name="Yasuda M."/>
            <person name="Tabata S."/>
        </authorList>
    </citation>
    <scope>NUCLEOTIDE SEQUENCE [LARGE SCALE GENOMIC DNA]</scope>
    <source>
        <strain>PCC 7120 / SAG 25.82 / UTEX 2576</strain>
    </source>
</reference>
<accession>Q8YU00</accession>
<gene>
    <name evidence="1" type="primary">ackA</name>
    <name type="ordered locus">all2561</name>
</gene>
<proteinExistence type="inferred from homology"/>
<dbReference type="EC" id="2.7.2.1" evidence="1"/>
<dbReference type="EMBL" id="BA000019">
    <property type="protein sequence ID" value="BAB74260.1"/>
    <property type="molecule type" value="Genomic_DNA"/>
</dbReference>
<dbReference type="PIR" id="AB2126">
    <property type="entry name" value="AB2126"/>
</dbReference>
<dbReference type="RefSeq" id="WP_010996717.1">
    <property type="nucleotide sequence ID" value="NZ_RSCN01000002.1"/>
</dbReference>
<dbReference type="SMR" id="Q8YU00"/>
<dbReference type="STRING" id="103690.gene:10494592"/>
<dbReference type="KEGG" id="ana:all2561"/>
<dbReference type="eggNOG" id="COG0282">
    <property type="taxonomic scope" value="Bacteria"/>
</dbReference>
<dbReference type="OrthoDB" id="9802453at2"/>
<dbReference type="UniPathway" id="UPA00340">
    <property type="reaction ID" value="UER00458"/>
</dbReference>
<dbReference type="Proteomes" id="UP000002483">
    <property type="component" value="Chromosome"/>
</dbReference>
<dbReference type="GO" id="GO:0005737">
    <property type="term" value="C:cytoplasm"/>
    <property type="evidence" value="ECO:0007669"/>
    <property type="project" value="UniProtKB-SubCell"/>
</dbReference>
<dbReference type="GO" id="GO:0008776">
    <property type="term" value="F:acetate kinase activity"/>
    <property type="evidence" value="ECO:0007669"/>
    <property type="project" value="UniProtKB-UniRule"/>
</dbReference>
<dbReference type="GO" id="GO:0005524">
    <property type="term" value="F:ATP binding"/>
    <property type="evidence" value="ECO:0007669"/>
    <property type="project" value="UniProtKB-KW"/>
</dbReference>
<dbReference type="GO" id="GO:0000287">
    <property type="term" value="F:magnesium ion binding"/>
    <property type="evidence" value="ECO:0007669"/>
    <property type="project" value="UniProtKB-UniRule"/>
</dbReference>
<dbReference type="GO" id="GO:0006083">
    <property type="term" value="P:acetate metabolic process"/>
    <property type="evidence" value="ECO:0007669"/>
    <property type="project" value="TreeGrafter"/>
</dbReference>
<dbReference type="GO" id="GO:0006085">
    <property type="term" value="P:acetyl-CoA biosynthetic process"/>
    <property type="evidence" value="ECO:0007669"/>
    <property type="project" value="UniProtKB-UniRule"/>
</dbReference>
<dbReference type="CDD" id="cd24010">
    <property type="entry name" value="ASKHA_NBD_AcK_PK"/>
    <property type="match status" value="1"/>
</dbReference>
<dbReference type="Gene3D" id="3.30.420.40">
    <property type="match status" value="2"/>
</dbReference>
<dbReference type="HAMAP" id="MF_00020">
    <property type="entry name" value="Acetate_kinase"/>
    <property type="match status" value="1"/>
</dbReference>
<dbReference type="InterPro" id="IPR004372">
    <property type="entry name" value="Ac/propionate_kinase"/>
</dbReference>
<dbReference type="InterPro" id="IPR000890">
    <property type="entry name" value="Aliphatic_acid_kin_short-chain"/>
</dbReference>
<dbReference type="InterPro" id="IPR023865">
    <property type="entry name" value="Aliphatic_acid_kinase_CS"/>
</dbReference>
<dbReference type="InterPro" id="IPR043129">
    <property type="entry name" value="ATPase_NBD"/>
</dbReference>
<dbReference type="NCBIfam" id="TIGR00016">
    <property type="entry name" value="ackA"/>
    <property type="match status" value="1"/>
</dbReference>
<dbReference type="PANTHER" id="PTHR21060">
    <property type="entry name" value="ACETATE KINASE"/>
    <property type="match status" value="1"/>
</dbReference>
<dbReference type="PANTHER" id="PTHR21060:SF15">
    <property type="entry name" value="ACETATE KINASE-RELATED"/>
    <property type="match status" value="1"/>
</dbReference>
<dbReference type="Pfam" id="PF00871">
    <property type="entry name" value="Acetate_kinase"/>
    <property type="match status" value="1"/>
</dbReference>
<dbReference type="PIRSF" id="PIRSF000722">
    <property type="entry name" value="Acetate_prop_kin"/>
    <property type="match status" value="1"/>
</dbReference>
<dbReference type="PRINTS" id="PR00471">
    <property type="entry name" value="ACETATEKNASE"/>
</dbReference>
<dbReference type="SUPFAM" id="SSF53067">
    <property type="entry name" value="Actin-like ATPase domain"/>
    <property type="match status" value="2"/>
</dbReference>
<dbReference type="PROSITE" id="PS01075">
    <property type="entry name" value="ACETATE_KINASE_1"/>
    <property type="match status" value="1"/>
</dbReference>
<dbReference type="PROSITE" id="PS01076">
    <property type="entry name" value="ACETATE_KINASE_2"/>
    <property type="match status" value="1"/>
</dbReference>